<name>CCA31_ARATH</name>
<dbReference type="EMBL" id="AB008267">
    <property type="protein sequence ID" value="BAB08272.1"/>
    <property type="molecule type" value="Genomic_DNA"/>
</dbReference>
<dbReference type="EMBL" id="CP002688">
    <property type="protein sequence ID" value="AED94908.1"/>
    <property type="molecule type" value="Genomic_DNA"/>
</dbReference>
<dbReference type="RefSeq" id="NP_199122.1">
    <property type="nucleotide sequence ID" value="NM_123674.2"/>
</dbReference>
<dbReference type="SMR" id="Q9FMH5"/>
<dbReference type="BioGRID" id="19574">
    <property type="interactions" value="21"/>
</dbReference>
<dbReference type="FunCoup" id="Q9FMH5">
    <property type="interactions" value="1957"/>
</dbReference>
<dbReference type="IntAct" id="Q9FMH5">
    <property type="interactions" value="14"/>
</dbReference>
<dbReference type="STRING" id="3702.Q9FMH5"/>
<dbReference type="PaxDb" id="3702-AT5G43080.1"/>
<dbReference type="EnsemblPlants" id="AT5G43080.1">
    <property type="protein sequence ID" value="AT5G43080.1"/>
    <property type="gene ID" value="AT5G43080"/>
</dbReference>
<dbReference type="GeneID" id="834324"/>
<dbReference type="Gramene" id="AT5G43080.1">
    <property type="protein sequence ID" value="AT5G43080.1"/>
    <property type="gene ID" value="AT5G43080"/>
</dbReference>
<dbReference type="KEGG" id="ath:AT5G43080"/>
<dbReference type="Araport" id="AT5G43080"/>
<dbReference type="TAIR" id="AT5G43080">
    <property type="gene designation" value="CYCA3"/>
</dbReference>
<dbReference type="eggNOG" id="KOG0654">
    <property type="taxonomic scope" value="Eukaryota"/>
</dbReference>
<dbReference type="HOGENOM" id="CLU_020695_2_2_1"/>
<dbReference type="InParanoid" id="Q9FMH5"/>
<dbReference type="OMA" id="QMCAPYV"/>
<dbReference type="PhylomeDB" id="Q9FMH5"/>
<dbReference type="PRO" id="PR:Q9FMH5"/>
<dbReference type="Proteomes" id="UP000006548">
    <property type="component" value="Chromosome 5"/>
</dbReference>
<dbReference type="ExpressionAtlas" id="Q9FMH5">
    <property type="expression patterns" value="baseline and differential"/>
</dbReference>
<dbReference type="GO" id="GO:0016538">
    <property type="term" value="F:cyclin-dependent protein serine/threonine kinase regulator activity"/>
    <property type="evidence" value="ECO:0007669"/>
    <property type="project" value="InterPro"/>
</dbReference>
<dbReference type="GO" id="GO:0051301">
    <property type="term" value="P:cell division"/>
    <property type="evidence" value="ECO:0007669"/>
    <property type="project" value="UniProtKB-KW"/>
</dbReference>
<dbReference type="GO" id="GO:0044772">
    <property type="term" value="P:mitotic cell cycle phase transition"/>
    <property type="evidence" value="ECO:0007669"/>
    <property type="project" value="InterPro"/>
</dbReference>
<dbReference type="CDD" id="cd20506">
    <property type="entry name" value="CYCLIN_AtCycA-like_rpt2"/>
    <property type="match status" value="1"/>
</dbReference>
<dbReference type="CDD" id="cd20562">
    <property type="entry name" value="CYCLIN_AtCycA_like_rpt1"/>
    <property type="match status" value="1"/>
</dbReference>
<dbReference type="FunFam" id="1.10.472.10:FF:000013">
    <property type="entry name" value="Cyclin A1"/>
    <property type="match status" value="1"/>
</dbReference>
<dbReference type="FunFam" id="1.10.472.10:FF:000167">
    <property type="entry name" value="Mitotic cyclin 6"/>
    <property type="match status" value="1"/>
</dbReference>
<dbReference type="Gene3D" id="1.10.472.10">
    <property type="entry name" value="Cyclin-like"/>
    <property type="match status" value="2"/>
</dbReference>
<dbReference type="InterPro" id="IPR039361">
    <property type="entry name" value="Cyclin"/>
</dbReference>
<dbReference type="InterPro" id="IPR013763">
    <property type="entry name" value="Cyclin-like_dom"/>
</dbReference>
<dbReference type="InterPro" id="IPR036915">
    <property type="entry name" value="Cyclin-like_sf"/>
</dbReference>
<dbReference type="InterPro" id="IPR046965">
    <property type="entry name" value="Cyclin_A/B-like"/>
</dbReference>
<dbReference type="InterPro" id="IPR004367">
    <property type="entry name" value="Cyclin_C-dom"/>
</dbReference>
<dbReference type="InterPro" id="IPR006671">
    <property type="entry name" value="Cyclin_N"/>
</dbReference>
<dbReference type="InterPro" id="IPR048258">
    <property type="entry name" value="Cyclins_cyclin-box"/>
</dbReference>
<dbReference type="PANTHER" id="PTHR10177">
    <property type="entry name" value="CYCLINS"/>
    <property type="match status" value="1"/>
</dbReference>
<dbReference type="Pfam" id="PF02984">
    <property type="entry name" value="Cyclin_C"/>
    <property type="match status" value="1"/>
</dbReference>
<dbReference type="Pfam" id="PF00134">
    <property type="entry name" value="Cyclin_N"/>
    <property type="match status" value="1"/>
</dbReference>
<dbReference type="PIRSF" id="PIRSF001771">
    <property type="entry name" value="Cyclin_A_B_D_E"/>
    <property type="match status" value="1"/>
</dbReference>
<dbReference type="SMART" id="SM00385">
    <property type="entry name" value="CYCLIN"/>
    <property type="match status" value="2"/>
</dbReference>
<dbReference type="SMART" id="SM01332">
    <property type="entry name" value="Cyclin_C"/>
    <property type="match status" value="1"/>
</dbReference>
<dbReference type="SUPFAM" id="SSF47954">
    <property type="entry name" value="Cyclin-like"/>
    <property type="match status" value="2"/>
</dbReference>
<dbReference type="PROSITE" id="PS00292">
    <property type="entry name" value="CYCLINS"/>
    <property type="match status" value="1"/>
</dbReference>
<proteinExistence type="inferred from homology"/>
<organism>
    <name type="scientific">Arabidopsis thaliana</name>
    <name type="common">Mouse-ear cress</name>
    <dbReference type="NCBI Taxonomy" id="3702"/>
    <lineage>
        <taxon>Eukaryota</taxon>
        <taxon>Viridiplantae</taxon>
        <taxon>Streptophyta</taxon>
        <taxon>Embryophyta</taxon>
        <taxon>Tracheophyta</taxon>
        <taxon>Spermatophyta</taxon>
        <taxon>Magnoliopsida</taxon>
        <taxon>eudicotyledons</taxon>
        <taxon>Gunneridae</taxon>
        <taxon>Pentapetalae</taxon>
        <taxon>rosids</taxon>
        <taxon>malvids</taxon>
        <taxon>Brassicales</taxon>
        <taxon>Brassicaceae</taxon>
        <taxon>Camelineae</taxon>
        <taxon>Arabidopsis</taxon>
    </lineage>
</organism>
<protein>
    <recommendedName>
        <fullName>Putative cyclin-A3-1</fullName>
    </recommendedName>
    <alternativeName>
        <fullName>G2/mitotic-specific cyclin-A3-1</fullName>
        <shortName>CycA3;1</shortName>
    </alternativeName>
</protein>
<reference key="1">
    <citation type="journal article" date="1997" name="DNA Res.">
        <title>Structural analysis of Arabidopsis thaliana chromosome 5. III. Sequence features of the regions of 1,191,918 bp covered by seventeen physically assigned P1 clones.</title>
        <authorList>
            <person name="Nakamura Y."/>
            <person name="Sato S."/>
            <person name="Kaneko T."/>
            <person name="Kotani H."/>
            <person name="Asamizu E."/>
            <person name="Miyajima N."/>
            <person name="Tabata S."/>
        </authorList>
    </citation>
    <scope>NUCLEOTIDE SEQUENCE [LARGE SCALE GENOMIC DNA]</scope>
    <source>
        <strain>cv. Columbia</strain>
    </source>
</reference>
<reference key="2">
    <citation type="journal article" date="2017" name="Plant J.">
        <title>Araport11: a complete reannotation of the Arabidopsis thaliana reference genome.</title>
        <authorList>
            <person name="Cheng C.Y."/>
            <person name="Krishnakumar V."/>
            <person name="Chan A.P."/>
            <person name="Thibaud-Nissen F."/>
            <person name="Schobel S."/>
            <person name="Town C.D."/>
        </authorList>
    </citation>
    <scope>GENOME REANNOTATION</scope>
    <source>
        <strain>cv. Columbia</strain>
    </source>
</reference>
<reference key="3">
    <citation type="journal article" date="2004" name="Plant Physiol.">
        <title>Genome-wide analysis of the cyclin family in Arabidopsis and comparative phylogenetic analysis of plant cyclin-like proteins.</title>
        <authorList>
            <person name="Wang G."/>
            <person name="Kong H."/>
            <person name="Sun Y."/>
            <person name="Zhang X."/>
            <person name="Zhang W."/>
            <person name="Altman N."/>
            <person name="dePamphilis C.W."/>
            <person name="Ma H."/>
        </authorList>
    </citation>
    <scope>GENE FAMILY</scope>
    <scope>NOMENCLATURE</scope>
</reference>
<gene>
    <name type="primary">CYCA3-1</name>
    <name type="ordered locus">At5g43080</name>
    <name type="ORF">MMG4.10</name>
</gene>
<feature type="chain" id="PRO_0000286998" description="Putative cyclin-A3-1">
    <location>
        <begin position="1"/>
        <end position="355"/>
    </location>
</feature>
<sequence>MADEKENCVRMTRAATKRKASMEAAIDKERINKKRVVLGELPNLSNIKKSRKATTKQKKKSVSIPTIETLNSDIDTRSDDPQMCGPYVTSIFEYLRQLEVKSRPLVDYIEKIQKDVTSNMRGVLVDWLVEVAEEYKLLSDTLYLAVSYIDRFLSLKTVNKQRLQLLGVTSMLIASKYEEITPPNVDDFCYITDNTYTKQEIVKMEADILLALQFELGNPTSNTFLRRFTRVAQEDFEMSHLQMEFLCSYLSELSMLDYQSVKFLPSTVAASAVFLARFIIRPKQHPWNVMLEEYTRYKAGDLKECVAMIHDLYLSRKCGALEAIREKYKQHKFKCVATMPVSPELPLTVFEDVNI</sequence>
<accession>Q9FMH5</accession>
<comment type="similarity">
    <text evidence="1">Belongs to the cyclin family. Cyclin AB subfamily.</text>
</comment>
<evidence type="ECO:0000305" key="1"/>
<keyword id="KW-0131">Cell cycle</keyword>
<keyword id="KW-0132">Cell division</keyword>
<keyword id="KW-0195">Cyclin</keyword>
<keyword id="KW-1185">Reference proteome</keyword>